<organism>
    <name type="scientific">Chlorobaculum tepidum (strain ATCC 49652 / DSM 12025 / NBRC 103806 / TLS)</name>
    <name type="common">Chlorobium tepidum</name>
    <dbReference type="NCBI Taxonomy" id="194439"/>
    <lineage>
        <taxon>Bacteria</taxon>
        <taxon>Pseudomonadati</taxon>
        <taxon>Chlorobiota</taxon>
        <taxon>Chlorobiia</taxon>
        <taxon>Chlorobiales</taxon>
        <taxon>Chlorobiaceae</taxon>
        <taxon>Chlorobaculum</taxon>
    </lineage>
</organism>
<sequence>MKKELIIGTRSSPLALWQAEFTKAELSRHFPELNITLKLVKTTGDVLLDSPLSKIGDMGLFTKDIEKHLLAKEIDLAVHSLKDVPTGTPEGLVISSFTKREDTRDVIISKSGKGLKDLPPNARMATSSLRRMSQLLSMRPDLQILDIRGNLNTRFKKFDDGEFDAMMLAYAGVYRLEFSDRISEILPHDVMLPAVGQGALGIETRTDDAETIEIVRVMNDSNTEICCRAERALLRHLQGGCQIPIGCYGSYISGTLKLLAFVGSVDGKTALRNELTKPVNTPEEAEAVGIELAEVLLSMGAEKILADIRKTR</sequence>
<protein>
    <recommendedName>
        <fullName evidence="1">Porphobilinogen deaminase</fullName>
        <shortName evidence="1">PBG</shortName>
        <ecNumber evidence="1">2.5.1.61</ecNumber>
    </recommendedName>
    <alternativeName>
        <fullName evidence="1">Hydroxymethylbilane synthase</fullName>
        <shortName evidence="1">HMBS</shortName>
    </alternativeName>
    <alternativeName>
        <fullName evidence="1">Pre-uroporphyrinogen synthase</fullName>
    </alternativeName>
</protein>
<dbReference type="EC" id="2.5.1.61" evidence="1"/>
<dbReference type="EMBL" id="AE006470">
    <property type="protein sequence ID" value="AAM72655.1"/>
    <property type="molecule type" value="Genomic_DNA"/>
</dbReference>
<dbReference type="RefSeq" id="NP_662313.1">
    <property type="nucleotide sequence ID" value="NC_002932.3"/>
</dbReference>
<dbReference type="RefSeq" id="WP_010933094.1">
    <property type="nucleotide sequence ID" value="NC_002932.3"/>
</dbReference>
<dbReference type="SMR" id="Q8KCJ4"/>
<dbReference type="STRING" id="194439.CT1427"/>
<dbReference type="EnsemblBacteria" id="AAM72655">
    <property type="protein sequence ID" value="AAM72655"/>
    <property type="gene ID" value="CT1427"/>
</dbReference>
<dbReference type="KEGG" id="cte:CT1427"/>
<dbReference type="PATRIC" id="fig|194439.7.peg.1295"/>
<dbReference type="eggNOG" id="COG0181">
    <property type="taxonomic scope" value="Bacteria"/>
</dbReference>
<dbReference type="HOGENOM" id="CLU_019704_0_2_10"/>
<dbReference type="OrthoDB" id="9810298at2"/>
<dbReference type="UniPathway" id="UPA00251">
    <property type="reaction ID" value="UER00319"/>
</dbReference>
<dbReference type="UniPathway" id="UPA00668"/>
<dbReference type="Proteomes" id="UP000001007">
    <property type="component" value="Chromosome"/>
</dbReference>
<dbReference type="GO" id="GO:0005737">
    <property type="term" value="C:cytoplasm"/>
    <property type="evidence" value="ECO:0007669"/>
    <property type="project" value="TreeGrafter"/>
</dbReference>
<dbReference type="GO" id="GO:0004418">
    <property type="term" value="F:hydroxymethylbilane synthase activity"/>
    <property type="evidence" value="ECO:0007669"/>
    <property type="project" value="UniProtKB-UniRule"/>
</dbReference>
<dbReference type="GO" id="GO:0015995">
    <property type="term" value="P:chlorophyll biosynthetic process"/>
    <property type="evidence" value="ECO:0007669"/>
    <property type="project" value="UniProtKB-UniRule"/>
</dbReference>
<dbReference type="GO" id="GO:0006782">
    <property type="term" value="P:protoporphyrinogen IX biosynthetic process"/>
    <property type="evidence" value="ECO:0007669"/>
    <property type="project" value="UniProtKB-UniRule"/>
</dbReference>
<dbReference type="CDD" id="cd13646">
    <property type="entry name" value="PBP2_EcHMBS_like"/>
    <property type="match status" value="1"/>
</dbReference>
<dbReference type="FunFam" id="3.30.160.40:FF:000002">
    <property type="entry name" value="Porphobilinogen deaminase"/>
    <property type="match status" value="1"/>
</dbReference>
<dbReference type="FunFam" id="3.40.190.10:FF:000004">
    <property type="entry name" value="Porphobilinogen deaminase"/>
    <property type="match status" value="1"/>
</dbReference>
<dbReference type="FunFam" id="3.40.190.10:FF:000005">
    <property type="entry name" value="Porphobilinogen deaminase"/>
    <property type="match status" value="1"/>
</dbReference>
<dbReference type="Gene3D" id="3.40.190.10">
    <property type="entry name" value="Periplasmic binding protein-like II"/>
    <property type="match status" value="2"/>
</dbReference>
<dbReference type="Gene3D" id="3.30.160.40">
    <property type="entry name" value="Porphobilinogen deaminase, C-terminal domain"/>
    <property type="match status" value="1"/>
</dbReference>
<dbReference type="HAMAP" id="MF_00260">
    <property type="entry name" value="Porphobil_deam"/>
    <property type="match status" value="1"/>
</dbReference>
<dbReference type="InterPro" id="IPR000860">
    <property type="entry name" value="HemC"/>
</dbReference>
<dbReference type="InterPro" id="IPR022419">
    <property type="entry name" value="Porphobilin_deaminase_cofac_BS"/>
</dbReference>
<dbReference type="InterPro" id="IPR022417">
    <property type="entry name" value="Porphobilin_deaminase_N"/>
</dbReference>
<dbReference type="InterPro" id="IPR022418">
    <property type="entry name" value="Porphobilinogen_deaminase_C"/>
</dbReference>
<dbReference type="InterPro" id="IPR036803">
    <property type="entry name" value="Porphobilinogen_deaminase_C_sf"/>
</dbReference>
<dbReference type="NCBIfam" id="TIGR00212">
    <property type="entry name" value="hemC"/>
    <property type="match status" value="1"/>
</dbReference>
<dbReference type="PANTHER" id="PTHR11557">
    <property type="entry name" value="PORPHOBILINOGEN DEAMINASE"/>
    <property type="match status" value="1"/>
</dbReference>
<dbReference type="PANTHER" id="PTHR11557:SF0">
    <property type="entry name" value="PORPHOBILINOGEN DEAMINASE"/>
    <property type="match status" value="1"/>
</dbReference>
<dbReference type="Pfam" id="PF01379">
    <property type="entry name" value="Porphobil_deam"/>
    <property type="match status" value="1"/>
</dbReference>
<dbReference type="Pfam" id="PF03900">
    <property type="entry name" value="Porphobil_deamC"/>
    <property type="match status" value="1"/>
</dbReference>
<dbReference type="PIRSF" id="PIRSF001438">
    <property type="entry name" value="4pyrrol_synth_OHMeBilane_synth"/>
    <property type="match status" value="1"/>
</dbReference>
<dbReference type="PRINTS" id="PR00151">
    <property type="entry name" value="PORPHBDMNASE"/>
</dbReference>
<dbReference type="SUPFAM" id="SSF53850">
    <property type="entry name" value="Periplasmic binding protein-like II"/>
    <property type="match status" value="1"/>
</dbReference>
<dbReference type="SUPFAM" id="SSF54782">
    <property type="entry name" value="Porphobilinogen deaminase (hydroxymethylbilane synthase), C-terminal domain"/>
    <property type="match status" value="1"/>
</dbReference>
<dbReference type="PROSITE" id="PS00533">
    <property type="entry name" value="PORPHOBILINOGEN_DEAM"/>
    <property type="match status" value="1"/>
</dbReference>
<proteinExistence type="inferred from homology"/>
<evidence type="ECO:0000255" key="1">
    <source>
        <dbReference type="HAMAP-Rule" id="MF_00260"/>
    </source>
</evidence>
<name>HEM3_CHLTE</name>
<keyword id="KW-0149">Chlorophyll biosynthesis</keyword>
<keyword id="KW-0627">Porphyrin biosynthesis</keyword>
<keyword id="KW-1185">Reference proteome</keyword>
<keyword id="KW-0808">Transferase</keyword>
<reference key="1">
    <citation type="journal article" date="2002" name="Proc. Natl. Acad. Sci. U.S.A.">
        <title>The complete genome sequence of Chlorobium tepidum TLS, a photosynthetic, anaerobic, green-sulfur bacterium.</title>
        <authorList>
            <person name="Eisen J.A."/>
            <person name="Nelson K.E."/>
            <person name="Paulsen I.T."/>
            <person name="Heidelberg J.F."/>
            <person name="Wu M."/>
            <person name="Dodson R.J."/>
            <person name="DeBoy R.T."/>
            <person name="Gwinn M.L."/>
            <person name="Nelson W.C."/>
            <person name="Haft D.H."/>
            <person name="Hickey E.K."/>
            <person name="Peterson J.D."/>
            <person name="Durkin A.S."/>
            <person name="Kolonay J.F."/>
            <person name="Yang F."/>
            <person name="Holt I.E."/>
            <person name="Umayam L.A."/>
            <person name="Mason T.M."/>
            <person name="Brenner M."/>
            <person name="Shea T.P."/>
            <person name="Parksey D.S."/>
            <person name="Nierman W.C."/>
            <person name="Feldblyum T.V."/>
            <person name="Hansen C.L."/>
            <person name="Craven M.B."/>
            <person name="Radune D."/>
            <person name="Vamathevan J.J."/>
            <person name="Khouri H.M."/>
            <person name="White O."/>
            <person name="Gruber T.M."/>
            <person name="Ketchum K.A."/>
            <person name="Venter J.C."/>
            <person name="Tettelin H."/>
            <person name="Bryant D.A."/>
            <person name="Fraser C.M."/>
        </authorList>
    </citation>
    <scope>NUCLEOTIDE SEQUENCE [LARGE SCALE GENOMIC DNA]</scope>
    <source>
        <strain>ATCC 49652 / DSM 12025 / NBRC 103806 / TLS</strain>
    </source>
</reference>
<gene>
    <name evidence="1" type="primary">hemC</name>
    <name type="ordered locus">CT1427</name>
</gene>
<feature type="chain" id="PRO_0000142922" description="Porphobilinogen deaminase">
    <location>
        <begin position="1"/>
        <end position="312"/>
    </location>
</feature>
<feature type="modified residue" description="S-(dipyrrolylmethanemethyl)cysteine" evidence="1">
    <location>
        <position position="241"/>
    </location>
</feature>
<comment type="function">
    <text evidence="1">Tetrapolymerization of the monopyrrole PBG into the hydroxymethylbilane pre-uroporphyrinogen in several discrete steps.</text>
</comment>
<comment type="catalytic activity">
    <reaction evidence="1">
        <text>4 porphobilinogen + H2O = hydroxymethylbilane + 4 NH4(+)</text>
        <dbReference type="Rhea" id="RHEA:13185"/>
        <dbReference type="ChEBI" id="CHEBI:15377"/>
        <dbReference type="ChEBI" id="CHEBI:28938"/>
        <dbReference type="ChEBI" id="CHEBI:57845"/>
        <dbReference type="ChEBI" id="CHEBI:58126"/>
        <dbReference type="EC" id="2.5.1.61"/>
    </reaction>
</comment>
<comment type="cofactor">
    <cofactor evidence="1">
        <name>dipyrromethane</name>
        <dbReference type="ChEBI" id="CHEBI:60342"/>
    </cofactor>
    <text evidence="1">Binds 1 dipyrromethane group covalently.</text>
</comment>
<comment type="pathway">
    <text evidence="1">Porphyrin-containing compound metabolism; protoporphyrin-IX biosynthesis; coproporphyrinogen-III from 5-aminolevulinate: step 2/4.</text>
</comment>
<comment type="pathway">
    <text evidence="1">Porphyrin-containing compound metabolism; chlorophyll biosynthesis.</text>
</comment>
<comment type="subunit">
    <text evidence="1">Monomer.</text>
</comment>
<comment type="miscellaneous">
    <text evidence="1">The porphobilinogen subunits are added to the dipyrromethane group.</text>
</comment>
<comment type="similarity">
    <text evidence="1">Belongs to the HMBS family.</text>
</comment>
<accession>Q8KCJ4</accession>